<organism>
    <name type="scientific">Homo sapiens</name>
    <name type="common">Human</name>
    <dbReference type="NCBI Taxonomy" id="9606"/>
    <lineage>
        <taxon>Eukaryota</taxon>
        <taxon>Metazoa</taxon>
        <taxon>Chordata</taxon>
        <taxon>Craniata</taxon>
        <taxon>Vertebrata</taxon>
        <taxon>Euteleostomi</taxon>
        <taxon>Mammalia</taxon>
        <taxon>Eutheria</taxon>
        <taxon>Euarchontoglires</taxon>
        <taxon>Primates</taxon>
        <taxon>Haplorrhini</taxon>
        <taxon>Catarrhini</taxon>
        <taxon>Hominidae</taxon>
        <taxon>Homo</taxon>
    </lineage>
</organism>
<reference key="1">
    <citation type="journal article" date="2000" name="J. Biol. Chem.">
        <title>Molecular cloning and expression of mammalian peroxisomal trans-2-enoyl-coenzyme A reductase cDNAs.</title>
        <authorList>
            <person name="Das A.K."/>
            <person name="Uhler M.D."/>
            <person name="Hajra A.K."/>
        </authorList>
    </citation>
    <scope>NUCLEOTIDE SEQUENCE [MRNA] (ISOFORM 1)</scope>
    <scope>ENZYME ACTIVITY</scope>
    <scope>CATALYTIC ACTIVITY</scope>
    <scope>FUNCTION</scope>
</reference>
<reference key="2">
    <citation type="journal article" date="2001" name="Comb. Chem. High Throughput Screen.">
        <title>Identification of a novel human peroxisomal 2,4-dienoyl-CoA reductase related protein using the M13 phage protein VI phage display technology.</title>
        <authorList>
            <person name="Amery L."/>
            <person name="Mannaerts G.P."/>
            <person name="Subramani S."/>
            <person name="Van Veldhoven P.P."/>
            <person name="Fransen M."/>
        </authorList>
    </citation>
    <scope>NUCLEOTIDE SEQUENCE [MRNA] (ISOFORM 1)</scope>
    <scope>SUBCELLULAR LOCATION</scope>
    <scope>INTERACTION WITH PEX5</scope>
    <scope>MUTAGENESIS OF LEU-303</scope>
</reference>
<reference key="3">
    <citation type="submission" date="1999-12" db="EMBL/GenBank/DDBJ databases">
        <title>A novel gene expressed in human liver non-tumor tissues.</title>
        <authorList>
            <person name="Li Y."/>
            <person name="Wu T."/>
            <person name="Xu S."/>
            <person name="Ren S."/>
            <person name="Chen Z."/>
            <person name="Han Z."/>
        </authorList>
    </citation>
    <scope>NUCLEOTIDE SEQUENCE [LARGE SCALE MRNA] (ISOFORM 1)</scope>
    <source>
        <tissue>Liver</tissue>
    </source>
</reference>
<reference key="4">
    <citation type="submission" date="1999-01" db="EMBL/GenBank/DDBJ databases">
        <title>Functional prediction of the coding sequences of 79 new genes deduced by analysis of cDNA clones from human fetal liver.</title>
        <authorList>
            <person name="Zhang C."/>
            <person name="Yu Y."/>
            <person name="Zhang S."/>
            <person name="Wei H."/>
            <person name="Zhang Y."/>
            <person name="Zhou G."/>
            <person name="Bi J."/>
            <person name="Liu M."/>
            <person name="He F."/>
        </authorList>
    </citation>
    <scope>NUCLEOTIDE SEQUENCE [LARGE SCALE MRNA] (ISOFORM 2)</scope>
    <source>
        <tissue>Fetal liver</tissue>
    </source>
</reference>
<reference key="5">
    <citation type="submission" date="2004-06" db="EMBL/GenBank/DDBJ databases">
        <title>Cloning of human full open reading frames in Gateway(TM) system entry vector (pDONR201).</title>
        <authorList>
            <person name="Ebert L."/>
            <person name="Schick M."/>
            <person name="Neubert P."/>
            <person name="Schatten R."/>
            <person name="Henze S."/>
            <person name="Korn B."/>
        </authorList>
    </citation>
    <scope>NUCLEOTIDE SEQUENCE [LARGE SCALE MRNA] (ISOFORM 2)</scope>
</reference>
<reference key="6">
    <citation type="journal article" date="2004" name="Nat. Genet.">
        <title>Complete sequencing and characterization of 21,243 full-length human cDNAs.</title>
        <authorList>
            <person name="Ota T."/>
            <person name="Suzuki Y."/>
            <person name="Nishikawa T."/>
            <person name="Otsuki T."/>
            <person name="Sugiyama T."/>
            <person name="Irie R."/>
            <person name="Wakamatsu A."/>
            <person name="Hayashi K."/>
            <person name="Sato H."/>
            <person name="Nagai K."/>
            <person name="Kimura K."/>
            <person name="Makita H."/>
            <person name="Sekine M."/>
            <person name="Obayashi M."/>
            <person name="Nishi T."/>
            <person name="Shibahara T."/>
            <person name="Tanaka T."/>
            <person name="Ishii S."/>
            <person name="Yamamoto J."/>
            <person name="Saito K."/>
            <person name="Kawai Y."/>
            <person name="Isono Y."/>
            <person name="Nakamura Y."/>
            <person name="Nagahari K."/>
            <person name="Murakami K."/>
            <person name="Yasuda T."/>
            <person name="Iwayanagi T."/>
            <person name="Wagatsuma M."/>
            <person name="Shiratori A."/>
            <person name="Sudo H."/>
            <person name="Hosoiri T."/>
            <person name="Kaku Y."/>
            <person name="Kodaira H."/>
            <person name="Kondo H."/>
            <person name="Sugawara M."/>
            <person name="Takahashi M."/>
            <person name="Kanda K."/>
            <person name="Yokoi T."/>
            <person name="Furuya T."/>
            <person name="Kikkawa E."/>
            <person name="Omura Y."/>
            <person name="Abe K."/>
            <person name="Kamihara K."/>
            <person name="Katsuta N."/>
            <person name="Sato K."/>
            <person name="Tanikawa M."/>
            <person name="Yamazaki M."/>
            <person name="Ninomiya K."/>
            <person name="Ishibashi T."/>
            <person name="Yamashita H."/>
            <person name="Murakawa K."/>
            <person name="Fujimori K."/>
            <person name="Tanai H."/>
            <person name="Kimata M."/>
            <person name="Watanabe M."/>
            <person name="Hiraoka S."/>
            <person name="Chiba Y."/>
            <person name="Ishida S."/>
            <person name="Ono Y."/>
            <person name="Takiguchi S."/>
            <person name="Watanabe S."/>
            <person name="Yosida M."/>
            <person name="Hotuta T."/>
            <person name="Kusano J."/>
            <person name="Kanehori K."/>
            <person name="Takahashi-Fujii A."/>
            <person name="Hara H."/>
            <person name="Tanase T.-O."/>
            <person name="Nomura Y."/>
            <person name="Togiya S."/>
            <person name="Komai F."/>
            <person name="Hara R."/>
            <person name="Takeuchi K."/>
            <person name="Arita M."/>
            <person name="Imose N."/>
            <person name="Musashino K."/>
            <person name="Yuuki H."/>
            <person name="Oshima A."/>
            <person name="Sasaki N."/>
            <person name="Aotsuka S."/>
            <person name="Yoshikawa Y."/>
            <person name="Matsunawa H."/>
            <person name="Ichihara T."/>
            <person name="Shiohata N."/>
            <person name="Sano S."/>
            <person name="Moriya S."/>
            <person name="Momiyama H."/>
            <person name="Satoh N."/>
            <person name="Takami S."/>
            <person name="Terashima Y."/>
            <person name="Suzuki O."/>
            <person name="Nakagawa S."/>
            <person name="Senoh A."/>
            <person name="Mizoguchi H."/>
            <person name="Goto Y."/>
            <person name="Shimizu F."/>
            <person name="Wakebe H."/>
            <person name="Hishigaki H."/>
            <person name="Watanabe T."/>
            <person name="Sugiyama A."/>
            <person name="Takemoto M."/>
            <person name="Kawakami B."/>
            <person name="Yamazaki M."/>
            <person name="Watanabe K."/>
            <person name="Kumagai A."/>
            <person name="Itakura S."/>
            <person name="Fukuzumi Y."/>
            <person name="Fujimori Y."/>
            <person name="Komiyama M."/>
            <person name="Tashiro H."/>
            <person name="Tanigami A."/>
            <person name="Fujiwara T."/>
            <person name="Ono T."/>
            <person name="Yamada K."/>
            <person name="Fujii Y."/>
            <person name="Ozaki K."/>
            <person name="Hirao M."/>
            <person name="Ohmori Y."/>
            <person name="Kawabata A."/>
            <person name="Hikiji T."/>
            <person name="Kobatake N."/>
            <person name="Inagaki H."/>
            <person name="Ikema Y."/>
            <person name="Okamoto S."/>
            <person name="Okitani R."/>
            <person name="Kawakami T."/>
            <person name="Noguchi S."/>
            <person name="Itoh T."/>
            <person name="Shigeta K."/>
            <person name="Senba T."/>
            <person name="Matsumura K."/>
            <person name="Nakajima Y."/>
            <person name="Mizuno T."/>
            <person name="Morinaga M."/>
            <person name="Sasaki M."/>
            <person name="Togashi T."/>
            <person name="Oyama M."/>
            <person name="Hata H."/>
            <person name="Watanabe M."/>
            <person name="Komatsu T."/>
            <person name="Mizushima-Sugano J."/>
            <person name="Satoh T."/>
            <person name="Shirai Y."/>
            <person name="Takahashi Y."/>
            <person name="Nakagawa K."/>
            <person name="Okumura K."/>
            <person name="Nagase T."/>
            <person name="Nomura N."/>
            <person name="Kikuchi H."/>
            <person name="Masuho Y."/>
            <person name="Yamashita R."/>
            <person name="Nakai K."/>
            <person name="Yada T."/>
            <person name="Nakamura Y."/>
            <person name="Ohara O."/>
            <person name="Isogai T."/>
            <person name="Sugano S."/>
        </authorList>
    </citation>
    <scope>NUCLEOTIDE SEQUENCE [LARGE SCALE MRNA] (ISOFORM 1)</scope>
    <source>
        <tissue>Colon</tissue>
    </source>
</reference>
<reference key="7">
    <citation type="journal article" date="2005" name="Nature">
        <title>Generation and annotation of the DNA sequences of human chromosomes 2 and 4.</title>
        <authorList>
            <person name="Hillier L.W."/>
            <person name="Graves T.A."/>
            <person name="Fulton R.S."/>
            <person name="Fulton L.A."/>
            <person name="Pepin K.H."/>
            <person name="Minx P."/>
            <person name="Wagner-McPherson C."/>
            <person name="Layman D."/>
            <person name="Wylie K."/>
            <person name="Sekhon M."/>
            <person name="Becker M.C."/>
            <person name="Fewell G.A."/>
            <person name="Delehaunty K.D."/>
            <person name="Miner T.L."/>
            <person name="Nash W.E."/>
            <person name="Kremitzki C."/>
            <person name="Oddy L."/>
            <person name="Du H."/>
            <person name="Sun H."/>
            <person name="Bradshaw-Cordum H."/>
            <person name="Ali J."/>
            <person name="Carter J."/>
            <person name="Cordes M."/>
            <person name="Harris A."/>
            <person name="Isak A."/>
            <person name="van Brunt A."/>
            <person name="Nguyen C."/>
            <person name="Du F."/>
            <person name="Courtney L."/>
            <person name="Kalicki J."/>
            <person name="Ozersky P."/>
            <person name="Abbott S."/>
            <person name="Armstrong J."/>
            <person name="Belter E.A."/>
            <person name="Caruso L."/>
            <person name="Cedroni M."/>
            <person name="Cotton M."/>
            <person name="Davidson T."/>
            <person name="Desai A."/>
            <person name="Elliott G."/>
            <person name="Erb T."/>
            <person name="Fronick C."/>
            <person name="Gaige T."/>
            <person name="Haakenson W."/>
            <person name="Haglund K."/>
            <person name="Holmes A."/>
            <person name="Harkins R."/>
            <person name="Kim K."/>
            <person name="Kruchowski S.S."/>
            <person name="Strong C.M."/>
            <person name="Grewal N."/>
            <person name="Goyea E."/>
            <person name="Hou S."/>
            <person name="Levy A."/>
            <person name="Martinka S."/>
            <person name="Mead K."/>
            <person name="McLellan M.D."/>
            <person name="Meyer R."/>
            <person name="Randall-Maher J."/>
            <person name="Tomlinson C."/>
            <person name="Dauphin-Kohlberg S."/>
            <person name="Kozlowicz-Reilly A."/>
            <person name="Shah N."/>
            <person name="Swearengen-Shahid S."/>
            <person name="Snider J."/>
            <person name="Strong J.T."/>
            <person name="Thompson J."/>
            <person name="Yoakum M."/>
            <person name="Leonard S."/>
            <person name="Pearman C."/>
            <person name="Trani L."/>
            <person name="Radionenko M."/>
            <person name="Waligorski J.E."/>
            <person name="Wang C."/>
            <person name="Rock S.M."/>
            <person name="Tin-Wollam A.-M."/>
            <person name="Maupin R."/>
            <person name="Latreille P."/>
            <person name="Wendl M.C."/>
            <person name="Yang S.-P."/>
            <person name="Pohl C."/>
            <person name="Wallis J.W."/>
            <person name="Spieth J."/>
            <person name="Bieri T.A."/>
            <person name="Berkowicz N."/>
            <person name="Nelson J.O."/>
            <person name="Osborne J."/>
            <person name="Ding L."/>
            <person name="Meyer R."/>
            <person name="Sabo A."/>
            <person name="Shotland Y."/>
            <person name="Sinha P."/>
            <person name="Wohldmann P.E."/>
            <person name="Cook L.L."/>
            <person name="Hickenbotham M.T."/>
            <person name="Eldred J."/>
            <person name="Williams D."/>
            <person name="Jones T.A."/>
            <person name="She X."/>
            <person name="Ciccarelli F.D."/>
            <person name="Izaurralde E."/>
            <person name="Taylor J."/>
            <person name="Schmutz J."/>
            <person name="Myers R.M."/>
            <person name="Cox D.R."/>
            <person name="Huang X."/>
            <person name="McPherson J.D."/>
            <person name="Mardis E.R."/>
            <person name="Clifton S.W."/>
            <person name="Warren W.C."/>
            <person name="Chinwalla A.T."/>
            <person name="Eddy S.R."/>
            <person name="Marra M.A."/>
            <person name="Ovcharenko I."/>
            <person name="Furey T.S."/>
            <person name="Miller W."/>
            <person name="Eichler E.E."/>
            <person name="Bork P."/>
            <person name="Suyama M."/>
            <person name="Torrents D."/>
            <person name="Waterston R.H."/>
            <person name="Wilson R.K."/>
        </authorList>
    </citation>
    <scope>NUCLEOTIDE SEQUENCE [LARGE SCALE GENOMIC DNA]</scope>
</reference>
<reference key="8">
    <citation type="journal article" date="2004" name="Genome Res.">
        <title>The status, quality, and expansion of the NIH full-length cDNA project: the Mammalian Gene Collection (MGC).</title>
        <authorList>
            <consortium name="The MGC Project Team"/>
        </authorList>
    </citation>
    <scope>NUCLEOTIDE SEQUENCE [LARGE SCALE MRNA] (ISOFORM 1)</scope>
    <source>
        <tissue>Placenta</tissue>
    </source>
</reference>
<reference key="9">
    <citation type="journal article" date="2002" name="Nucleic Acids Res.">
        <title>Ku86 autoantigen related protein-1 transcription initiates from a CpG island and is induced by p53 through a nearby p53 response element.</title>
        <authorList>
            <person name="Braastad C.D."/>
            <person name="Leguia M."/>
            <person name="Hendrickson E.A."/>
        </authorList>
    </citation>
    <scope>INDUCTION</scope>
</reference>
<reference key="10">
    <citation type="journal article" date="2014" name="J. Proteomics">
        <title>An enzyme assisted RP-RPLC approach for in-depth analysis of human liver phosphoproteome.</title>
        <authorList>
            <person name="Bian Y."/>
            <person name="Song C."/>
            <person name="Cheng K."/>
            <person name="Dong M."/>
            <person name="Wang F."/>
            <person name="Huang J."/>
            <person name="Sun D."/>
            <person name="Wang L."/>
            <person name="Ye M."/>
            <person name="Zou H."/>
        </authorList>
    </citation>
    <scope>PHOSPHORYLATION [LARGE SCALE ANALYSIS] AT SER-49 AND TYR-179</scope>
    <scope>IDENTIFICATION BY MASS SPECTROMETRY [LARGE SCALE ANALYSIS]</scope>
    <source>
        <tissue>Liver</tissue>
    </source>
</reference>
<reference key="11">
    <citation type="submission" date="2005-05" db="PDB data bank">
        <title>Crystal structure of peroxisomal trans 2-enoyl CoA reductase (PECRA).</title>
        <authorList>
            <consortium name="Structural genomics consortium (SGC)"/>
        </authorList>
    </citation>
    <scope>X-RAY CRYSTALLOGRAPHY (1.9 ANGSTROMS) IN COMPLEX WITH ADENINE AND PHOSPHATE</scope>
</reference>
<accession>Q9BY49</accession>
<accession>B2RE42</accession>
<accession>Q53TC4</accession>
<accession>Q6IAK9</accession>
<accession>Q9NRD4</accession>
<accession>Q9NY60</accession>
<accession>Q9P1A4</accession>
<keyword id="KW-0002">3D-structure</keyword>
<keyword id="KW-0025">Alternative splicing</keyword>
<keyword id="KW-0275">Fatty acid biosynthesis</keyword>
<keyword id="KW-0276">Fatty acid metabolism</keyword>
<keyword id="KW-0444">Lipid biosynthesis</keyword>
<keyword id="KW-0443">Lipid metabolism</keyword>
<keyword id="KW-0521">NADP</keyword>
<keyword id="KW-0560">Oxidoreductase</keyword>
<keyword id="KW-0576">Peroxisome</keyword>
<keyword id="KW-0597">Phosphoprotein</keyword>
<keyword id="KW-1267">Proteomics identification</keyword>
<keyword id="KW-1185">Reference proteome</keyword>
<comment type="function">
    <text evidence="4">Participates in chain elongation of fatty acids. Catalyzes the reduction of trans-2-enoyl-CoAs of varying chain lengths from 6:1 to 16:1, having maximum activity with 10:1 CoA. Has no 2,4-dienoyl-CoA reductase activity.</text>
</comment>
<comment type="catalytic activity">
    <reaction evidence="4">
        <text>a (2E)-enoyl-CoA + NADPH + H(+) = a 2,3-saturated acyl-CoA + NADP(+)</text>
        <dbReference type="Rhea" id="RHEA:33763"/>
        <dbReference type="ChEBI" id="CHEBI:15378"/>
        <dbReference type="ChEBI" id="CHEBI:57783"/>
        <dbReference type="ChEBI" id="CHEBI:58349"/>
        <dbReference type="ChEBI" id="CHEBI:58856"/>
        <dbReference type="ChEBI" id="CHEBI:65111"/>
        <dbReference type="EC" id="1.3.1.38"/>
    </reaction>
    <physiologicalReaction direction="left-to-right" evidence="11">
        <dbReference type="Rhea" id="RHEA:33764"/>
    </physiologicalReaction>
</comment>
<comment type="catalytic activity">
    <reaction evidence="4">
        <text>(2E)-decenoyl-CoA + NADPH + H(+) = decanoyl-CoA + NADP(+)</text>
        <dbReference type="Rhea" id="RHEA:44960"/>
        <dbReference type="ChEBI" id="CHEBI:15378"/>
        <dbReference type="ChEBI" id="CHEBI:57783"/>
        <dbReference type="ChEBI" id="CHEBI:58349"/>
        <dbReference type="ChEBI" id="CHEBI:61406"/>
        <dbReference type="ChEBI" id="CHEBI:61430"/>
    </reaction>
    <physiologicalReaction direction="left-to-right" evidence="11">
        <dbReference type="Rhea" id="RHEA:44961"/>
    </physiologicalReaction>
</comment>
<comment type="catalytic activity">
    <reaction evidence="3">
        <text>(2E)-hexenoyl-CoA + NADPH + H(+) = hexanoyl-CoA + NADP(+)</text>
        <dbReference type="Rhea" id="RHEA:44956"/>
        <dbReference type="ChEBI" id="CHEBI:15378"/>
        <dbReference type="ChEBI" id="CHEBI:57783"/>
        <dbReference type="ChEBI" id="CHEBI:58349"/>
        <dbReference type="ChEBI" id="CHEBI:62077"/>
        <dbReference type="ChEBI" id="CHEBI:62620"/>
    </reaction>
    <physiologicalReaction direction="left-to-right" evidence="3">
        <dbReference type="Rhea" id="RHEA:44957"/>
    </physiologicalReaction>
</comment>
<comment type="catalytic activity">
    <reaction evidence="3">
        <text>(2E)-octenoyl-CoA + NADPH + H(+) = octanoyl-CoA + NADP(+)</text>
        <dbReference type="Rhea" id="RHEA:44952"/>
        <dbReference type="ChEBI" id="CHEBI:15378"/>
        <dbReference type="ChEBI" id="CHEBI:57386"/>
        <dbReference type="ChEBI" id="CHEBI:57783"/>
        <dbReference type="ChEBI" id="CHEBI:58349"/>
        <dbReference type="ChEBI" id="CHEBI:62242"/>
    </reaction>
    <physiologicalReaction direction="left-to-right" evidence="3">
        <dbReference type="Rhea" id="RHEA:44953"/>
    </physiologicalReaction>
</comment>
<comment type="catalytic activity">
    <reaction evidence="3">
        <text>(2E)-dodecenoyl-CoA + NADPH + H(+) = dodecanoyl-CoA + NADP(+)</text>
        <dbReference type="Rhea" id="RHEA:44964"/>
        <dbReference type="ChEBI" id="CHEBI:15378"/>
        <dbReference type="ChEBI" id="CHEBI:57330"/>
        <dbReference type="ChEBI" id="CHEBI:57375"/>
        <dbReference type="ChEBI" id="CHEBI:57783"/>
        <dbReference type="ChEBI" id="CHEBI:58349"/>
    </reaction>
    <physiologicalReaction direction="left-to-right" evidence="3">
        <dbReference type="Rhea" id="RHEA:44965"/>
    </physiologicalReaction>
</comment>
<comment type="catalytic activity">
    <reaction evidence="3">
        <text>(2E)-tetradecenoyl-CoA + NADPH + H(+) = tetradecanoyl-CoA + NADP(+)</text>
        <dbReference type="Rhea" id="RHEA:44968"/>
        <dbReference type="ChEBI" id="CHEBI:15378"/>
        <dbReference type="ChEBI" id="CHEBI:57385"/>
        <dbReference type="ChEBI" id="CHEBI:57783"/>
        <dbReference type="ChEBI" id="CHEBI:58349"/>
        <dbReference type="ChEBI" id="CHEBI:61405"/>
    </reaction>
    <physiologicalReaction direction="left-to-right" evidence="3">
        <dbReference type="Rhea" id="RHEA:44969"/>
    </physiologicalReaction>
</comment>
<comment type="pathway">
    <text evidence="4">Lipid metabolism; fatty acid biosynthesis.</text>
</comment>
<comment type="subunit">
    <text evidence="5 7">Interacts with PEX5, probably required to target it into peroxisomes.</text>
</comment>
<comment type="subcellular location">
    <subcellularLocation>
        <location evidence="5">Peroxisome</location>
    </subcellularLocation>
</comment>
<comment type="alternative products">
    <event type="alternative splicing"/>
    <isoform>
        <id>Q9BY49-1</id>
        <name>1</name>
        <sequence type="displayed"/>
    </isoform>
    <isoform>
        <id>Q9BY49-2</id>
        <name>2</name>
        <sequence type="described" ref="VSP_013260"/>
    </isoform>
</comment>
<comment type="induction">
    <text evidence="6">Not induced by IR.</text>
</comment>
<comment type="similarity">
    <text evidence="10">Belongs to the short-chain dehydrogenases/reductases (SDR) family.</text>
</comment>
<name>PECR_HUMAN</name>
<gene>
    <name evidence="12" type="primary">PECR</name>
    <name type="synonym">SDR29C1</name>
    <name type="ORF">PRO1004</name>
</gene>
<proteinExistence type="evidence at protein level"/>
<feature type="chain" id="PRO_0000054740" description="Peroxisomal trans-2-enoyl-CoA reductase">
    <location>
        <begin position="1"/>
        <end position="303"/>
    </location>
</feature>
<feature type="short sequence motif" description="Microbody targeting signal">
    <location>
        <begin position="301"/>
        <end position="303"/>
    </location>
</feature>
<feature type="active site" description="Proton acceptor" evidence="1">
    <location>
        <position position="179"/>
    </location>
</feature>
<feature type="binding site" evidence="1">
    <location>
        <begin position="23"/>
        <end position="47"/>
    </location>
    <ligand>
        <name>NADP(+)</name>
        <dbReference type="ChEBI" id="CHEBI:58349"/>
    </ligand>
</feature>
<feature type="modified residue" description="N6-succinyllysine" evidence="2">
    <location>
        <position position="32"/>
    </location>
</feature>
<feature type="modified residue" description="Phosphoserine" evidence="13">
    <location>
        <position position="49"/>
    </location>
</feature>
<feature type="modified residue" description="Phosphotyrosine" evidence="13">
    <location>
        <position position="179"/>
    </location>
</feature>
<feature type="splice variant" id="VSP_013260" description="In isoform 2." evidence="8 9">
    <location>
        <begin position="1"/>
        <end position="146"/>
    </location>
</feature>
<feature type="sequence variant" id="VAR_021535" description="In dbSNP:rs1429148.">
    <original>E</original>
    <variation>K</variation>
    <location>
        <position position="149"/>
    </location>
</feature>
<feature type="sequence variant" id="VAR_021536" description="In dbSNP:rs9288513.">
    <original>F</original>
    <variation>L</variation>
    <location>
        <position position="297"/>
    </location>
</feature>
<feature type="mutagenesis site" description="Abolishes localization to peroxisomes." evidence="5">
    <location>
        <position position="303"/>
    </location>
</feature>
<feature type="sequence conflict" description="In Ref. 2; CAB89810." evidence="10" ref="2">
    <original>I</original>
    <variation>F</variation>
    <location>
        <position position="22"/>
    </location>
</feature>
<feature type="sequence conflict" description="In Ref. 2; CAB89810." evidence="10" ref="2">
    <original>E</original>
    <variation>R</variation>
    <location>
        <position position="129"/>
    </location>
</feature>
<feature type="sequence conflict" description="In Ref. 2; CAB89810." evidence="10" ref="2">
    <original>T</original>
    <variation>S</variation>
    <location>
        <position position="135"/>
    </location>
</feature>
<feature type="sequence conflict" description="In Ref. 5; CAG33426." evidence="10" ref="5">
    <original>S</original>
    <variation>P</variation>
    <location>
        <position position="248"/>
    </location>
</feature>
<feature type="turn" evidence="14">
    <location>
        <begin position="13"/>
        <end position="18"/>
    </location>
</feature>
<feature type="strand" evidence="14">
    <location>
        <begin position="20"/>
        <end position="24"/>
    </location>
</feature>
<feature type="turn" evidence="14">
    <location>
        <begin position="25"/>
        <end position="27"/>
    </location>
</feature>
<feature type="helix" evidence="14">
    <location>
        <begin position="29"/>
        <end position="40"/>
    </location>
</feature>
<feature type="strand" evidence="14">
    <location>
        <begin position="44"/>
        <end position="50"/>
    </location>
</feature>
<feature type="helix" evidence="14">
    <location>
        <begin position="52"/>
        <end position="64"/>
    </location>
</feature>
<feature type="strand" evidence="14">
    <location>
        <begin position="74"/>
        <end position="78"/>
    </location>
</feature>
<feature type="helix" evidence="14">
    <location>
        <begin position="84"/>
        <end position="98"/>
    </location>
</feature>
<feature type="strand" evidence="14">
    <location>
        <begin position="103"/>
        <end position="106"/>
    </location>
</feature>
<feature type="helix" evidence="14">
    <location>
        <begin position="116"/>
        <end position="118"/>
    </location>
</feature>
<feature type="helix" evidence="14">
    <location>
        <begin position="121"/>
        <end position="131"/>
    </location>
</feature>
<feature type="helix" evidence="14">
    <location>
        <begin position="133"/>
        <end position="145"/>
    </location>
</feature>
<feature type="helix" evidence="14">
    <location>
        <begin position="147"/>
        <end position="150"/>
    </location>
</feature>
<feature type="strand" evidence="14">
    <location>
        <begin position="152"/>
        <end position="157"/>
    </location>
</feature>
<feature type="helix" evidence="14">
    <location>
        <begin position="169"/>
        <end position="188"/>
    </location>
</feature>
<feature type="helix" evidence="14">
    <location>
        <begin position="190"/>
        <end position="192"/>
    </location>
</feature>
<feature type="strand" evidence="14">
    <location>
        <begin position="194"/>
        <end position="201"/>
    </location>
</feature>
<feature type="helix" evidence="14">
    <location>
        <begin position="208"/>
        <end position="210"/>
    </location>
</feature>
<feature type="helix" evidence="14">
    <location>
        <begin position="214"/>
        <end position="221"/>
    </location>
</feature>
<feature type="helix" evidence="14">
    <location>
        <begin position="224"/>
        <end position="227"/>
    </location>
</feature>
<feature type="helix" evidence="14">
    <location>
        <begin position="237"/>
        <end position="247"/>
    </location>
</feature>
<feature type="helix" evidence="14">
    <location>
        <begin position="249"/>
        <end position="251"/>
    </location>
</feature>
<feature type="strand" evidence="14">
    <location>
        <begin position="258"/>
        <end position="262"/>
    </location>
</feature>
<feature type="helix" evidence="14">
    <location>
        <begin position="265"/>
        <end position="267"/>
    </location>
</feature>
<feature type="helix" evidence="14">
    <location>
        <begin position="288"/>
        <end position="302"/>
    </location>
</feature>
<protein>
    <recommendedName>
        <fullName evidence="10">Peroxisomal trans-2-enoyl-CoA reductase</fullName>
        <shortName>TERP</shortName>
        <ecNumber evidence="4">1.3.1.38</ecNumber>
    </recommendedName>
    <alternativeName>
        <fullName>2,4-dienoyl-CoA reductase-related protein</fullName>
        <shortName>DCR-RP</shortName>
    </alternativeName>
    <alternativeName>
        <fullName>HPDHase</fullName>
    </alternativeName>
    <alternativeName>
        <fullName>Short chain dehydrogenase/reductase family 29C member 1</fullName>
    </alternativeName>
    <alternativeName>
        <fullName>pVI-ARL</fullName>
    </alternativeName>
</protein>
<dbReference type="EC" id="1.3.1.38" evidence="4"/>
<dbReference type="EMBL" id="AF232009">
    <property type="protein sequence ID" value="AAF69798.1"/>
    <property type="molecule type" value="mRNA"/>
</dbReference>
<dbReference type="EMBL" id="AJ250303">
    <property type="protein sequence ID" value="CAB89810.1"/>
    <property type="molecule type" value="mRNA"/>
</dbReference>
<dbReference type="EMBL" id="AF212234">
    <property type="protein sequence ID" value="AAK14920.1"/>
    <property type="molecule type" value="mRNA"/>
</dbReference>
<dbReference type="EMBL" id="AF119841">
    <property type="protein sequence ID" value="AAF69595.1"/>
    <property type="molecule type" value="mRNA"/>
</dbReference>
<dbReference type="EMBL" id="CR457145">
    <property type="protein sequence ID" value="CAG33426.1"/>
    <property type="molecule type" value="mRNA"/>
</dbReference>
<dbReference type="EMBL" id="AK315795">
    <property type="protein sequence ID" value="BAG38139.1"/>
    <property type="molecule type" value="mRNA"/>
</dbReference>
<dbReference type="EMBL" id="AC010686">
    <property type="protein sequence ID" value="AAY14657.1"/>
    <property type="molecule type" value="Genomic_DNA"/>
</dbReference>
<dbReference type="EMBL" id="BC002529">
    <property type="protein sequence ID" value="AAH02529.1"/>
    <property type="molecule type" value="mRNA"/>
</dbReference>
<dbReference type="CCDS" id="CCDS33375.1">
    <molecule id="Q9BY49-1"/>
</dbReference>
<dbReference type="RefSeq" id="NP_060911.2">
    <molecule id="Q9BY49-1"/>
    <property type="nucleotide sequence ID" value="NM_018441.5"/>
</dbReference>
<dbReference type="RefSeq" id="XP_011509780.1">
    <property type="nucleotide sequence ID" value="XM_011511478.2"/>
</dbReference>
<dbReference type="RefSeq" id="XP_047301064.1">
    <molecule id="Q9BY49-2"/>
    <property type="nucleotide sequence ID" value="XM_047445108.1"/>
</dbReference>
<dbReference type="RefSeq" id="XP_054198981.1">
    <molecule id="Q9BY49-2"/>
    <property type="nucleotide sequence ID" value="XM_054343006.1"/>
</dbReference>
<dbReference type="PDB" id="1YXM">
    <property type="method" value="X-ray"/>
    <property type="resolution" value="1.90 A"/>
    <property type="chains" value="A/B/C/D=1-303"/>
</dbReference>
<dbReference type="PDBsum" id="1YXM"/>
<dbReference type="SMR" id="Q9BY49"/>
<dbReference type="BioGRID" id="120932">
    <property type="interactions" value="27"/>
</dbReference>
<dbReference type="FunCoup" id="Q9BY49">
    <property type="interactions" value="337"/>
</dbReference>
<dbReference type="IntAct" id="Q9BY49">
    <property type="interactions" value="21"/>
</dbReference>
<dbReference type="STRING" id="9606.ENSP00000265322"/>
<dbReference type="DrugBank" id="DB00173">
    <property type="generic name" value="Adenine"/>
</dbReference>
<dbReference type="SwissLipids" id="SLP:000001094"/>
<dbReference type="GlyGen" id="Q9BY49">
    <property type="glycosylation" value="3 sites, 1 O-linked glycan (3 sites)"/>
</dbReference>
<dbReference type="iPTMnet" id="Q9BY49"/>
<dbReference type="PhosphoSitePlus" id="Q9BY49"/>
<dbReference type="BioMuta" id="PECR"/>
<dbReference type="DMDM" id="62287123"/>
<dbReference type="jPOST" id="Q9BY49"/>
<dbReference type="MassIVE" id="Q9BY49"/>
<dbReference type="PaxDb" id="9606-ENSP00000265322"/>
<dbReference type="PeptideAtlas" id="Q9BY49"/>
<dbReference type="ProteomicsDB" id="79584">
    <molecule id="Q9BY49-1"/>
</dbReference>
<dbReference type="ProteomicsDB" id="79585">
    <molecule id="Q9BY49-2"/>
</dbReference>
<dbReference type="Pumba" id="Q9BY49"/>
<dbReference type="Antibodypedia" id="20074">
    <property type="antibodies" value="198 antibodies from 27 providers"/>
</dbReference>
<dbReference type="DNASU" id="55825"/>
<dbReference type="Ensembl" id="ENST00000265322.8">
    <molecule id="Q9BY49-1"/>
    <property type="protein sequence ID" value="ENSP00000265322.7"/>
    <property type="gene ID" value="ENSG00000115425.14"/>
</dbReference>
<dbReference type="GeneID" id="55825"/>
<dbReference type="KEGG" id="hsa:55825"/>
<dbReference type="MANE-Select" id="ENST00000265322.8">
    <property type="protein sequence ID" value="ENSP00000265322.7"/>
    <property type="RefSeq nucleotide sequence ID" value="NM_018441.6"/>
    <property type="RefSeq protein sequence ID" value="NP_060911.2"/>
</dbReference>
<dbReference type="UCSC" id="uc002vft.4">
    <molecule id="Q9BY49-1"/>
    <property type="organism name" value="human"/>
</dbReference>
<dbReference type="AGR" id="HGNC:18281"/>
<dbReference type="CTD" id="55825"/>
<dbReference type="DisGeNET" id="55825"/>
<dbReference type="GeneCards" id="PECR"/>
<dbReference type="HGNC" id="HGNC:18281">
    <property type="gene designation" value="PECR"/>
</dbReference>
<dbReference type="HPA" id="ENSG00000115425">
    <property type="expression patterns" value="Tissue enriched (liver)"/>
</dbReference>
<dbReference type="MalaCards" id="PECR"/>
<dbReference type="MIM" id="605843">
    <property type="type" value="gene"/>
</dbReference>
<dbReference type="neXtProt" id="NX_Q9BY49"/>
<dbReference type="OpenTargets" id="ENSG00000115425"/>
<dbReference type="PharmGKB" id="PA134967510"/>
<dbReference type="VEuPathDB" id="HostDB:ENSG00000115425"/>
<dbReference type="eggNOG" id="KOG0725">
    <property type="taxonomic scope" value="Eukaryota"/>
</dbReference>
<dbReference type="GeneTree" id="ENSGT00940000156882"/>
<dbReference type="HOGENOM" id="CLU_010194_1_2_1"/>
<dbReference type="InParanoid" id="Q9BY49"/>
<dbReference type="OMA" id="GYRICIN"/>
<dbReference type="OrthoDB" id="417891at2759"/>
<dbReference type="PAN-GO" id="Q9BY49">
    <property type="GO annotations" value="3 GO annotations based on evolutionary models"/>
</dbReference>
<dbReference type="PhylomeDB" id="Q9BY49"/>
<dbReference type="TreeFam" id="TF315256"/>
<dbReference type="BioCyc" id="MetaCyc:HS03889-MONOMER"/>
<dbReference type="BRENDA" id="1.3.1.38">
    <property type="organism ID" value="2681"/>
</dbReference>
<dbReference type="PathwayCommons" id="Q9BY49"/>
<dbReference type="Reactome" id="R-HSA-389599">
    <property type="pathway name" value="Alpha-oxidation of phytanate"/>
</dbReference>
<dbReference type="Reactome" id="R-HSA-9033241">
    <property type="pathway name" value="Peroxisomal protein import"/>
</dbReference>
<dbReference type="SignaLink" id="Q9BY49"/>
<dbReference type="UniPathway" id="UPA00094"/>
<dbReference type="BioGRID-ORCS" id="55825">
    <property type="hits" value="12 hits in 1158 CRISPR screens"/>
</dbReference>
<dbReference type="ChiTaRS" id="PECR">
    <property type="organism name" value="human"/>
</dbReference>
<dbReference type="EvolutionaryTrace" id="Q9BY49"/>
<dbReference type="GeneWiki" id="PECR"/>
<dbReference type="GenomeRNAi" id="55825"/>
<dbReference type="Pharos" id="Q9BY49">
    <property type="development level" value="Tbio"/>
</dbReference>
<dbReference type="PRO" id="PR:Q9BY49"/>
<dbReference type="Proteomes" id="UP000005640">
    <property type="component" value="Chromosome 2"/>
</dbReference>
<dbReference type="RNAct" id="Q9BY49">
    <property type="molecule type" value="protein"/>
</dbReference>
<dbReference type="Bgee" id="ENSG00000115425">
    <property type="expression patterns" value="Expressed in renal medulla and 193 other cell types or tissues"/>
</dbReference>
<dbReference type="ExpressionAtlas" id="Q9BY49">
    <property type="expression patterns" value="baseline and differential"/>
</dbReference>
<dbReference type="GO" id="GO:0005829">
    <property type="term" value="C:cytosol"/>
    <property type="evidence" value="ECO:0000304"/>
    <property type="project" value="Reactome"/>
</dbReference>
<dbReference type="GO" id="GO:0005739">
    <property type="term" value="C:mitochondrion"/>
    <property type="evidence" value="ECO:0007669"/>
    <property type="project" value="Ensembl"/>
</dbReference>
<dbReference type="GO" id="GO:0005778">
    <property type="term" value="C:peroxisomal membrane"/>
    <property type="evidence" value="ECO:0000250"/>
    <property type="project" value="UniProtKB"/>
</dbReference>
<dbReference type="GO" id="GO:0005777">
    <property type="term" value="C:peroxisome"/>
    <property type="evidence" value="ECO:0000314"/>
    <property type="project" value="HPA"/>
</dbReference>
<dbReference type="GO" id="GO:0005102">
    <property type="term" value="F:signaling receptor binding"/>
    <property type="evidence" value="ECO:0000353"/>
    <property type="project" value="UniProtKB"/>
</dbReference>
<dbReference type="GO" id="GO:0019166">
    <property type="term" value="F:trans-2-enoyl-CoA reductase (NADPH) activity"/>
    <property type="evidence" value="ECO:0000314"/>
    <property type="project" value="UniProtKB"/>
</dbReference>
<dbReference type="GO" id="GO:0006633">
    <property type="term" value="P:fatty acid biosynthetic process"/>
    <property type="evidence" value="ECO:0007669"/>
    <property type="project" value="UniProtKB-UniPathway"/>
</dbReference>
<dbReference type="GO" id="GO:0033306">
    <property type="term" value="P:phytol metabolic process"/>
    <property type="evidence" value="ECO:0000314"/>
    <property type="project" value="UniProtKB"/>
</dbReference>
<dbReference type="CDD" id="cd05369">
    <property type="entry name" value="TER_DECR_SDR_a"/>
    <property type="match status" value="1"/>
</dbReference>
<dbReference type="FunFam" id="3.40.50.720:FF:000335">
    <property type="entry name" value="Peroxisomal trans-2-enoyl-CoA reductase"/>
    <property type="match status" value="1"/>
</dbReference>
<dbReference type="Gene3D" id="3.40.50.720">
    <property type="entry name" value="NAD(P)-binding Rossmann-like Domain"/>
    <property type="match status" value="1"/>
</dbReference>
<dbReference type="InterPro" id="IPR036291">
    <property type="entry name" value="NAD(P)-bd_dom_sf"/>
</dbReference>
<dbReference type="InterPro" id="IPR052388">
    <property type="entry name" value="Peroxisomal_t2-enoyl-CoA_red"/>
</dbReference>
<dbReference type="InterPro" id="IPR002347">
    <property type="entry name" value="SDR_fam"/>
</dbReference>
<dbReference type="PANTHER" id="PTHR24317">
    <property type="entry name" value="PEROXISOMAL TRANS-2-ENOYL-COA REDUCTASE"/>
    <property type="match status" value="1"/>
</dbReference>
<dbReference type="PANTHER" id="PTHR24317:SF7">
    <property type="entry name" value="PEROXISOMAL TRANS-2-ENOYL-COA REDUCTASE"/>
    <property type="match status" value="1"/>
</dbReference>
<dbReference type="Pfam" id="PF13561">
    <property type="entry name" value="adh_short_C2"/>
    <property type="match status" value="1"/>
</dbReference>
<dbReference type="PRINTS" id="PR00081">
    <property type="entry name" value="GDHRDH"/>
</dbReference>
<dbReference type="SUPFAM" id="SSF51735">
    <property type="entry name" value="NAD(P)-binding Rossmann-fold domains"/>
    <property type="match status" value="1"/>
</dbReference>
<evidence type="ECO:0000250" key="1"/>
<evidence type="ECO:0000250" key="2">
    <source>
        <dbReference type="UniProtKB" id="Q99MZ7"/>
    </source>
</evidence>
<evidence type="ECO:0000250" key="3">
    <source>
        <dbReference type="UniProtKB" id="Q9JIF5"/>
    </source>
</evidence>
<evidence type="ECO:0000269" key="4">
    <source>
    </source>
</evidence>
<evidence type="ECO:0000269" key="5">
    <source>
    </source>
</evidence>
<evidence type="ECO:0000269" key="6">
    <source>
    </source>
</evidence>
<evidence type="ECO:0000269" key="7">
    <source ref="11"/>
</evidence>
<evidence type="ECO:0000303" key="8">
    <source ref="4"/>
</evidence>
<evidence type="ECO:0000303" key="9">
    <source ref="5"/>
</evidence>
<evidence type="ECO:0000305" key="10"/>
<evidence type="ECO:0000305" key="11">
    <source>
    </source>
</evidence>
<evidence type="ECO:0000312" key="12">
    <source>
        <dbReference type="HGNC" id="HGNC:18281"/>
    </source>
</evidence>
<evidence type="ECO:0007744" key="13">
    <source>
    </source>
</evidence>
<evidence type="ECO:0007829" key="14">
    <source>
        <dbReference type="PDB" id="1YXM"/>
    </source>
</evidence>
<sequence length="303" mass="32544">MASWAKGRSYLAPGLLQGQVAIVTGGATGIGKAIVKELLELGSNVVIASRKLERLKSAADELQANLPPTKQARVIPIQCNIRNEEEVNNLVKSTLDTFGKINFLVNNGGGQFLSPAEHISSKGWHAVLETNLTGTFYMCKAVYSSWMKEHGGSIVNIIVPTKAGFPLAVHSGAARAGVYNLTKSLALEWACSGIRINCVAPGVIYSQTAVENYGSWGQSFFEGSFQKIPAKRIGVPEEVSSVVCFLLSPAASFITGQSVDVDGGRSLYTHSYEVPDHDNWPKGAGDLSVVKKMKETFKEKAKL</sequence>